<name>RNPA_BACC7</name>
<reference key="1">
    <citation type="submission" date="2008-10" db="EMBL/GenBank/DDBJ databases">
        <title>Genome sequence of Bacillus cereus AH187.</title>
        <authorList>
            <person name="Dodson R.J."/>
            <person name="Durkin A.S."/>
            <person name="Rosovitz M.J."/>
            <person name="Rasko D.A."/>
            <person name="Kolsto A.B."/>
            <person name="Okstad O.A."/>
            <person name="Ravel J."/>
            <person name="Sutton G."/>
        </authorList>
    </citation>
    <scope>NUCLEOTIDE SEQUENCE [LARGE SCALE GENOMIC DNA]</scope>
    <source>
        <strain>AH187</strain>
    </source>
</reference>
<keyword id="KW-0255">Endonuclease</keyword>
<keyword id="KW-0378">Hydrolase</keyword>
<keyword id="KW-0540">Nuclease</keyword>
<keyword id="KW-0694">RNA-binding</keyword>
<keyword id="KW-0819">tRNA processing</keyword>
<feature type="chain" id="PRO_1000194603" description="Ribonuclease P protein component">
    <location>
        <begin position="1"/>
        <end position="115"/>
    </location>
</feature>
<organism>
    <name type="scientific">Bacillus cereus (strain AH187)</name>
    <dbReference type="NCBI Taxonomy" id="405534"/>
    <lineage>
        <taxon>Bacteria</taxon>
        <taxon>Bacillati</taxon>
        <taxon>Bacillota</taxon>
        <taxon>Bacilli</taxon>
        <taxon>Bacillales</taxon>
        <taxon>Bacillaceae</taxon>
        <taxon>Bacillus</taxon>
        <taxon>Bacillus cereus group</taxon>
    </lineage>
</organism>
<gene>
    <name evidence="1" type="primary">rnpA</name>
    <name type="ordered locus">BCAH187_A5674</name>
</gene>
<protein>
    <recommendedName>
        <fullName evidence="1">Ribonuclease P protein component</fullName>
        <shortName evidence="1">RNase P protein</shortName>
        <shortName evidence="1">RNaseP protein</shortName>
        <ecNumber evidence="1">3.1.26.5</ecNumber>
    </recommendedName>
    <alternativeName>
        <fullName evidence="1">Protein C5</fullName>
    </alternativeName>
</protein>
<comment type="function">
    <text evidence="1">RNaseP catalyzes the removal of the 5'-leader sequence from pre-tRNA to produce the mature 5'-terminus. It can also cleave other RNA substrates such as 4.5S RNA. The protein component plays an auxiliary but essential role in vivo by binding to the 5'-leader sequence and broadening the substrate specificity of the ribozyme.</text>
</comment>
<comment type="catalytic activity">
    <reaction evidence="1">
        <text>Endonucleolytic cleavage of RNA, removing 5'-extranucleotides from tRNA precursor.</text>
        <dbReference type="EC" id="3.1.26.5"/>
    </reaction>
</comment>
<comment type="subunit">
    <text evidence="1">Consists of a catalytic RNA component (M1 or rnpB) and a protein subunit.</text>
</comment>
<comment type="similarity">
    <text evidence="1">Belongs to the RnpA family.</text>
</comment>
<sequence>MKKKHRIKKNDEFQTVFQKGKSTANRQFVVYQLDKEEQPNFRIGLSVSKKIGNAVVRNRIKRMIRQSITELKDEIDSGKDFVIIARKPCAEMTYEELKKSLIHVFKRSGMKRIKK</sequence>
<accession>B7HZH3</accession>
<proteinExistence type="inferred from homology"/>
<dbReference type="EC" id="3.1.26.5" evidence="1"/>
<dbReference type="EMBL" id="CP001177">
    <property type="protein sequence ID" value="ACJ77648.1"/>
    <property type="molecule type" value="Genomic_DNA"/>
</dbReference>
<dbReference type="SMR" id="B7HZH3"/>
<dbReference type="KEGG" id="bcr:BCAH187_A5674"/>
<dbReference type="HOGENOM" id="CLU_117179_9_1_9"/>
<dbReference type="Proteomes" id="UP000002214">
    <property type="component" value="Chromosome"/>
</dbReference>
<dbReference type="GO" id="GO:0030677">
    <property type="term" value="C:ribonuclease P complex"/>
    <property type="evidence" value="ECO:0007669"/>
    <property type="project" value="TreeGrafter"/>
</dbReference>
<dbReference type="GO" id="GO:0042781">
    <property type="term" value="F:3'-tRNA processing endoribonuclease activity"/>
    <property type="evidence" value="ECO:0007669"/>
    <property type="project" value="TreeGrafter"/>
</dbReference>
<dbReference type="GO" id="GO:0004526">
    <property type="term" value="F:ribonuclease P activity"/>
    <property type="evidence" value="ECO:0007669"/>
    <property type="project" value="UniProtKB-UniRule"/>
</dbReference>
<dbReference type="GO" id="GO:0000049">
    <property type="term" value="F:tRNA binding"/>
    <property type="evidence" value="ECO:0007669"/>
    <property type="project" value="UniProtKB-UniRule"/>
</dbReference>
<dbReference type="GO" id="GO:0001682">
    <property type="term" value="P:tRNA 5'-leader removal"/>
    <property type="evidence" value="ECO:0007669"/>
    <property type="project" value="UniProtKB-UniRule"/>
</dbReference>
<dbReference type="FunFam" id="3.30.230.10:FF:000021">
    <property type="entry name" value="Ribonuclease P protein component"/>
    <property type="match status" value="1"/>
</dbReference>
<dbReference type="Gene3D" id="3.30.230.10">
    <property type="match status" value="1"/>
</dbReference>
<dbReference type="HAMAP" id="MF_00227">
    <property type="entry name" value="RNase_P"/>
    <property type="match status" value="1"/>
</dbReference>
<dbReference type="InterPro" id="IPR020568">
    <property type="entry name" value="Ribosomal_Su5_D2-typ_SF"/>
</dbReference>
<dbReference type="InterPro" id="IPR014721">
    <property type="entry name" value="Ribsml_uS5_D2-typ_fold_subgr"/>
</dbReference>
<dbReference type="InterPro" id="IPR000100">
    <property type="entry name" value="RNase_P"/>
</dbReference>
<dbReference type="InterPro" id="IPR020539">
    <property type="entry name" value="RNase_P_CS"/>
</dbReference>
<dbReference type="NCBIfam" id="TIGR00188">
    <property type="entry name" value="rnpA"/>
    <property type="match status" value="1"/>
</dbReference>
<dbReference type="PANTHER" id="PTHR33992">
    <property type="entry name" value="RIBONUCLEASE P PROTEIN COMPONENT"/>
    <property type="match status" value="1"/>
</dbReference>
<dbReference type="PANTHER" id="PTHR33992:SF1">
    <property type="entry name" value="RIBONUCLEASE P PROTEIN COMPONENT"/>
    <property type="match status" value="1"/>
</dbReference>
<dbReference type="Pfam" id="PF00825">
    <property type="entry name" value="Ribonuclease_P"/>
    <property type="match status" value="1"/>
</dbReference>
<dbReference type="SUPFAM" id="SSF54211">
    <property type="entry name" value="Ribosomal protein S5 domain 2-like"/>
    <property type="match status" value="1"/>
</dbReference>
<dbReference type="PROSITE" id="PS00648">
    <property type="entry name" value="RIBONUCLEASE_P"/>
    <property type="match status" value="1"/>
</dbReference>
<evidence type="ECO:0000255" key="1">
    <source>
        <dbReference type="HAMAP-Rule" id="MF_00227"/>
    </source>
</evidence>